<dbReference type="EC" id="2.1.1.74" evidence="1"/>
<dbReference type="EMBL" id="CP000661">
    <property type="protein sequence ID" value="ABP70066.1"/>
    <property type="molecule type" value="Genomic_DNA"/>
</dbReference>
<dbReference type="SMR" id="A4WRQ2"/>
<dbReference type="STRING" id="349102.Rsph17025_1165"/>
<dbReference type="KEGG" id="rsq:Rsph17025_1165"/>
<dbReference type="eggNOG" id="COG1206">
    <property type="taxonomic scope" value="Bacteria"/>
</dbReference>
<dbReference type="HOGENOM" id="CLU_033057_1_0_5"/>
<dbReference type="BioCyc" id="RSPH349102:G1G8M-1193-MONOMER"/>
<dbReference type="GO" id="GO:0005829">
    <property type="term" value="C:cytosol"/>
    <property type="evidence" value="ECO:0007669"/>
    <property type="project" value="TreeGrafter"/>
</dbReference>
<dbReference type="GO" id="GO:0050660">
    <property type="term" value="F:flavin adenine dinucleotide binding"/>
    <property type="evidence" value="ECO:0007669"/>
    <property type="project" value="UniProtKB-UniRule"/>
</dbReference>
<dbReference type="GO" id="GO:0047151">
    <property type="term" value="F:tRNA (uracil(54)-C5)-methyltransferase activity, 5,10-methylenetetrahydrofolate-dependent"/>
    <property type="evidence" value="ECO:0007669"/>
    <property type="project" value="UniProtKB-UniRule"/>
</dbReference>
<dbReference type="GO" id="GO:0030488">
    <property type="term" value="P:tRNA methylation"/>
    <property type="evidence" value="ECO:0007669"/>
    <property type="project" value="TreeGrafter"/>
</dbReference>
<dbReference type="GO" id="GO:0002098">
    <property type="term" value="P:tRNA wobble uridine modification"/>
    <property type="evidence" value="ECO:0007669"/>
    <property type="project" value="TreeGrafter"/>
</dbReference>
<dbReference type="Gene3D" id="3.50.50.60">
    <property type="entry name" value="FAD/NAD(P)-binding domain"/>
    <property type="match status" value="2"/>
</dbReference>
<dbReference type="HAMAP" id="MF_01037">
    <property type="entry name" value="TrmFO"/>
    <property type="match status" value="1"/>
</dbReference>
<dbReference type="InterPro" id="IPR036188">
    <property type="entry name" value="FAD/NAD-bd_sf"/>
</dbReference>
<dbReference type="InterPro" id="IPR002218">
    <property type="entry name" value="MnmG-rel"/>
</dbReference>
<dbReference type="InterPro" id="IPR020595">
    <property type="entry name" value="MnmG-rel_CS"/>
</dbReference>
<dbReference type="InterPro" id="IPR040131">
    <property type="entry name" value="MnmG_N"/>
</dbReference>
<dbReference type="InterPro" id="IPR004417">
    <property type="entry name" value="TrmFO"/>
</dbReference>
<dbReference type="NCBIfam" id="TIGR00137">
    <property type="entry name" value="gid_trmFO"/>
    <property type="match status" value="1"/>
</dbReference>
<dbReference type="NCBIfam" id="NF003739">
    <property type="entry name" value="PRK05335.1"/>
    <property type="match status" value="1"/>
</dbReference>
<dbReference type="PANTHER" id="PTHR11806">
    <property type="entry name" value="GLUCOSE INHIBITED DIVISION PROTEIN A"/>
    <property type="match status" value="1"/>
</dbReference>
<dbReference type="PANTHER" id="PTHR11806:SF2">
    <property type="entry name" value="METHYLENETETRAHYDROFOLATE--TRNA-(URACIL-5-)-METHYLTRANSFERASE TRMFO"/>
    <property type="match status" value="1"/>
</dbReference>
<dbReference type="Pfam" id="PF01134">
    <property type="entry name" value="GIDA"/>
    <property type="match status" value="1"/>
</dbReference>
<dbReference type="SUPFAM" id="SSF51905">
    <property type="entry name" value="FAD/NAD(P)-binding domain"/>
    <property type="match status" value="1"/>
</dbReference>
<dbReference type="PROSITE" id="PS01281">
    <property type="entry name" value="GIDA_2"/>
    <property type="match status" value="1"/>
</dbReference>
<reference key="1">
    <citation type="submission" date="2007-04" db="EMBL/GenBank/DDBJ databases">
        <title>Complete sequence of chromosome of Rhodobacter sphaeroides ATCC 17025.</title>
        <authorList>
            <consortium name="US DOE Joint Genome Institute"/>
            <person name="Copeland A."/>
            <person name="Lucas S."/>
            <person name="Lapidus A."/>
            <person name="Barry K."/>
            <person name="Detter J.C."/>
            <person name="Glavina del Rio T."/>
            <person name="Hammon N."/>
            <person name="Israni S."/>
            <person name="Dalin E."/>
            <person name="Tice H."/>
            <person name="Pitluck S."/>
            <person name="Chertkov O."/>
            <person name="Brettin T."/>
            <person name="Bruce D."/>
            <person name="Han C."/>
            <person name="Schmutz J."/>
            <person name="Larimer F."/>
            <person name="Land M."/>
            <person name="Hauser L."/>
            <person name="Kyrpides N."/>
            <person name="Kim E."/>
            <person name="Richardson P."/>
            <person name="Mackenzie C."/>
            <person name="Choudhary M."/>
            <person name="Donohue T.J."/>
            <person name="Kaplan S."/>
        </authorList>
    </citation>
    <scope>NUCLEOTIDE SEQUENCE [LARGE SCALE GENOMIC DNA]</scope>
    <source>
        <strain>ATCC 17025 / ATH 2.4.3</strain>
    </source>
</reference>
<feature type="chain" id="PRO_1000063927" description="Methylenetetrahydrofolate--tRNA-(uracil-5-)-methyltransferase TrmFO">
    <location>
        <begin position="1"/>
        <end position="444"/>
    </location>
</feature>
<feature type="binding site" evidence="1">
    <location>
        <begin position="9"/>
        <end position="14"/>
    </location>
    <ligand>
        <name>FAD</name>
        <dbReference type="ChEBI" id="CHEBI:57692"/>
    </ligand>
</feature>
<evidence type="ECO:0000255" key="1">
    <source>
        <dbReference type="HAMAP-Rule" id="MF_01037"/>
    </source>
</evidence>
<gene>
    <name evidence="1" type="primary">trmFO</name>
    <name type="synonym">gid</name>
    <name type="ordered locus">Rsph17025_1165</name>
</gene>
<protein>
    <recommendedName>
        <fullName evidence="1">Methylenetetrahydrofolate--tRNA-(uracil-5-)-methyltransferase TrmFO</fullName>
        <ecNumber evidence="1">2.1.1.74</ecNumber>
    </recommendedName>
    <alternativeName>
        <fullName evidence="1">Folate-dependent tRNA (uracil-5-)-methyltransferase</fullName>
    </alternativeName>
    <alternativeName>
        <fullName evidence="1">Folate-dependent tRNA(M-5-U54)-methyltransferase</fullName>
    </alternativeName>
</protein>
<keyword id="KW-0963">Cytoplasm</keyword>
<keyword id="KW-0274">FAD</keyword>
<keyword id="KW-0285">Flavoprotein</keyword>
<keyword id="KW-0489">Methyltransferase</keyword>
<keyword id="KW-0520">NAD</keyword>
<keyword id="KW-0521">NADP</keyword>
<keyword id="KW-0808">Transferase</keyword>
<keyword id="KW-0819">tRNA processing</keyword>
<comment type="function">
    <text evidence="1">Catalyzes the folate-dependent formation of 5-methyl-uridine at position 54 (M-5-U54) in all tRNAs.</text>
</comment>
<comment type="catalytic activity">
    <reaction evidence="1">
        <text>uridine(54) in tRNA + (6R)-5,10-methylene-5,6,7,8-tetrahydrofolate + NADH + H(+) = 5-methyluridine(54) in tRNA + (6S)-5,6,7,8-tetrahydrofolate + NAD(+)</text>
        <dbReference type="Rhea" id="RHEA:16873"/>
        <dbReference type="Rhea" id="RHEA-COMP:10167"/>
        <dbReference type="Rhea" id="RHEA-COMP:10193"/>
        <dbReference type="ChEBI" id="CHEBI:15378"/>
        <dbReference type="ChEBI" id="CHEBI:15636"/>
        <dbReference type="ChEBI" id="CHEBI:57453"/>
        <dbReference type="ChEBI" id="CHEBI:57540"/>
        <dbReference type="ChEBI" id="CHEBI:57945"/>
        <dbReference type="ChEBI" id="CHEBI:65315"/>
        <dbReference type="ChEBI" id="CHEBI:74447"/>
        <dbReference type="EC" id="2.1.1.74"/>
    </reaction>
</comment>
<comment type="catalytic activity">
    <reaction evidence="1">
        <text>uridine(54) in tRNA + (6R)-5,10-methylene-5,6,7,8-tetrahydrofolate + NADPH + H(+) = 5-methyluridine(54) in tRNA + (6S)-5,6,7,8-tetrahydrofolate + NADP(+)</text>
        <dbReference type="Rhea" id="RHEA:62372"/>
        <dbReference type="Rhea" id="RHEA-COMP:10167"/>
        <dbReference type="Rhea" id="RHEA-COMP:10193"/>
        <dbReference type="ChEBI" id="CHEBI:15378"/>
        <dbReference type="ChEBI" id="CHEBI:15636"/>
        <dbReference type="ChEBI" id="CHEBI:57453"/>
        <dbReference type="ChEBI" id="CHEBI:57783"/>
        <dbReference type="ChEBI" id="CHEBI:58349"/>
        <dbReference type="ChEBI" id="CHEBI:65315"/>
        <dbReference type="ChEBI" id="CHEBI:74447"/>
        <dbReference type="EC" id="2.1.1.74"/>
    </reaction>
</comment>
<comment type="cofactor">
    <cofactor evidence="1">
        <name>FAD</name>
        <dbReference type="ChEBI" id="CHEBI:57692"/>
    </cofactor>
</comment>
<comment type="subcellular location">
    <subcellularLocation>
        <location evidence="1">Cytoplasm</location>
    </subcellularLocation>
</comment>
<comment type="similarity">
    <text evidence="1">Belongs to the MnmG family. TrmFO subfamily.</text>
</comment>
<proteinExistence type="inferred from homology"/>
<organism>
    <name type="scientific">Cereibacter sphaeroides (strain ATCC 17025 / ATH 2.4.3)</name>
    <name type="common">Rhodobacter sphaeroides</name>
    <dbReference type="NCBI Taxonomy" id="349102"/>
    <lineage>
        <taxon>Bacteria</taxon>
        <taxon>Pseudomonadati</taxon>
        <taxon>Pseudomonadota</taxon>
        <taxon>Alphaproteobacteria</taxon>
        <taxon>Rhodobacterales</taxon>
        <taxon>Paracoccaceae</taxon>
        <taxon>Cereibacter</taxon>
    </lineage>
</organism>
<accession>A4WRQ2</accession>
<name>TRMFO_CERS5</name>
<sequence length="444" mass="48625">MTRSLHIVGAGMAGSEAAWQAAEMGVPVVLHEMRPRVGTFAHRTGQFAEMVCSNSFRSDDDERNAVGLLHWEMRAARGLIMEMASAHRLPAGGALAVDRDPFAESVTARLREHPLISVVDEELAELPSDGDWIIATGPLTSSSLAESIRAVTGAQSLAFFDAIAPIVYAESIDMSVAWRQSRYDKGETEDERTAYINCPMTRDQYEAFIDALLAAEKTEFHEGETAGYFDGCLPIEVMAERGRETLRHGPMKPVGLTNAHKPQDKAHAVVQLRRDNKLGTLYNIVGFQTKMKYGAQTSVFRMIPGLENASFARLGGIHRNTFLNSPTLLDDRMRLKLRPNIRFAGQVTGVEGYVESAAMGLLAGRMAAAEILGRDLPPPPPETAMGALITHITGGAEAKTFQPMNVNFGLFPPIDARGGRRGRKDRYKAYTHRAKAAFTEWLAA</sequence>